<evidence type="ECO:0000255" key="1">
    <source>
        <dbReference type="HAMAP-Rule" id="MF_00227"/>
    </source>
</evidence>
<evidence type="ECO:0000256" key="2">
    <source>
        <dbReference type="SAM" id="MobiDB-lite"/>
    </source>
</evidence>
<accession>C0RMG2</accession>
<name>RNPA_BRUMB</name>
<comment type="function">
    <text evidence="1">RNaseP catalyzes the removal of the 5'-leader sequence from pre-tRNA to produce the mature 5'-terminus. It can also cleave other RNA substrates such as 4.5S RNA. The protein component plays an auxiliary but essential role in vivo by binding to the 5'-leader sequence and broadening the substrate specificity of the ribozyme.</text>
</comment>
<comment type="catalytic activity">
    <reaction evidence="1">
        <text>Endonucleolytic cleavage of RNA, removing 5'-extranucleotides from tRNA precursor.</text>
        <dbReference type="EC" id="3.1.26.5"/>
    </reaction>
</comment>
<comment type="subunit">
    <text evidence="1">Consists of a catalytic RNA component (M1 or rnpB) and a protein subunit.</text>
</comment>
<comment type="similarity">
    <text evidence="1">Belongs to the RnpA family.</text>
</comment>
<sequence length="141" mass="16153">MKSKKQILRLRKRAEFLTVRNGEKRRGPLFLMEVRERTEEESNAAKTGDNPRVGFTVTKKNGNAVIRNRIRRRLKEAIRCHAGRDMAPSTDYVIVAREQALNAPFSQLTEELSRRITAKGERRSGGKRRTERPEPGPVNGK</sequence>
<organism>
    <name type="scientific">Brucella melitensis biotype 2 (strain ATCC 23457)</name>
    <dbReference type="NCBI Taxonomy" id="546272"/>
    <lineage>
        <taxon>Bacteria</taxon>
        <taxon>Pseudomonadati</taxon>
        <taxon>Pseudomonadota</taxon>
        <taxon>Alphaproteobacteria</taxon>
        <taxon>Hyphomicrobiales</taxon>
        <taxon>Brucellaceae</taxon>
        <taxon>Brucella/Ochrobactrum group</taxon>
        <taxon>Brucella</taxon>
    </lineage>
</organism>
<keyword id="KW-0255">Endonuclease</keyword>
<keyword id="KW-0378">Hydrolase</keyword>
<keyword id="KW-0540">Nuclease</keyword>
<keyword id="KW-0694">RNA-binding</keyword>
<keyword id="KW-0819">tRNA processing</keyword>
<proteinExistence type="inferred from homology"/>
<dbReference type="EC" id="3.1.26.5" evidence="1"/>
<dbReference type="EMBL" id="CP001489">
    <property type="protein sequence ID" value="ACO02795.1"/>
    <property type="molecule type" value="Genomic_DNA"/>
</dbReference>
<dbReference type="RefSeq" id="WP_004692143.1">
    <property type="nucleotide sequence ID" value="NC_012442.1"/>
</dbReference>
<dbReference type="SMR" id="C0RMG2"/>
<dbReference type="GeneID" id="93015193"/>
<dbReference type="KEGG" id="bmi:BMEA_B1008"/>
<dbReference type="HOGENOM" id="CLU_117179_6_1_5"/>
<dbReference type="Proteomes" id="UP000001748">
    <property type="component" value="Chromosome II"/>
</dbReference>
<dbReference type="GO" id="GO:0030677">
    <property type="term" value="C:ribonuclease P complex"/>
    <property type="evidence" value="ECO:0007669"/>
    <property type="project" value="TreeGrafter"/>
</dbReference>
<dbReference type="GO" id="GO:0042781">
    <property type="term" value="F:3'-tRNA processing endoribonuclease activity"/>
    <property type="evidence" value="ECO:0007669"/>
    <property type="project" value="TreeGrafter"/>
</dbReference>
<dbReference type="GO" id="GO:0004526">
    <property type="term" value="F:ribonuclease P activity"/>
    <property type="evidence" value="ECO:0007669"/>
    <property type="project" value="UniProtKB-UniRule"/>
</dbReference>
<dbReference type="GO" id="GO:0000049">
    <property type="term" value="F:tRNA binding"/>
    <property type="evidence" value="ECO:0007669"/>
    <property type="project" value="UniProtKB-UniRule"/>
</dbReference>
<dbReference type="GO" id="GO:0001682">
    <property type="term" value="P:tRNA 5'-leader removal"/>
    <property type="evidence" value="ECO:0007669"/>
    <property type="project" value="UniProtKB-UniRule"/>
</dbReference>
<dbReference type="Gene3D" id="3.30.230.10">
    <property type="match status" value="1"/>
</dbReference>
<dbReference type="HAMAP" id="MF_00227">
    <property type="entry name" value="RNase_P"/>
    <property type="match status" value="1"/>
</dbReference>
<dbReference type="InterPro" id="IPR020568">
    <property type="entry name" value="Ribosomal_Su5_D2-typ_SF"/>
</dbReference>
<dbReference type="InterPro" id="IPR014721">
    <property type="entry name" value="Ribsml_uS5_D2-typ_fold_subgr"/>
</dbReference>
<dbReference type="InterPro" id="IPR000100">
    <property type="entry name" value="RNase_P"/>
</dbReference>
<dbReference type="InterPro" id="IPR020539">
    <property type="entry name" value="RNase_P_CS"/>
</dbReference>
<dbReference type="NCBIfam" id="TIGR00188">
    <property type="entry name" value="rnpA"/>
    <property type="match status" value="1"/>
</dbReference>
<dbReference type="PANTHER" id="PTHR33992">
    <property type="entry name" value="RIBONUCLEASE P PROTEIN COMPONENT"/>
    <property type="match status" value="1"/>
</dbReference>
<dbReference type="PANTHER" id="PTHR33992:SF1">
    <property type="entry name" value="RIBONUCLEASE P PROTEIN COMPONENT"/>
    <property type="match status" value="1"/>
</dbReference>
<dbReference type="Pfam" id="PF00825">
    <property type="entry name" value="Ribonuclease_P"/>
    <property type="match status" value="1"/>
</dbReference>
<dbReference type="SUPFAM" id="SSF54211">
    <property type="entry name" value="Ribosomal protein S5 domain 2-like"/>
    <property type="match status" value="1"/>
</dbReference>
<dbReference type="PROSITE" id="PS00648">
    <property type="entry name" value="RIBONUCLEASE_P"/>
    <property type="match status" value="1"/>
</dbReference>
<feature type="chain" id="PRO_1000194618" description="Ribonuclease P protein component">
    <location>
        <begin position="1"/>
        <end position="141"/>
    </location>
</feature>
<feature type="region of interest" description="Disordered" evidence="2">
    <location>
        <begin position="37"/>
        <end position="56"/>
    </location>
</feature>
<feature type="region of interest" description="Disordered" evidence="2">
    <location>
        <begin position="114"/>
        <end position="141"/>
    </location>
</feature>
<feature type="compositionally biased region" description="Basic and acidic residues" evidence="2">
    <location>
        <begin position="114"/>
        <end position="124"/>
    </location>
</feature>
<protein>
    <recommendedName>
        <fullName evidence="1">Ribonuclease P protein component</fullName>
        <shortName evidence="1">RNase P protein</shortName>
        <shortName evidence="1">RNaseP protein</shortName>
        <ecNumber evidence="1">3.1.26.5</ecNumber>
    </recommendedName>
    <alternativeName>
        <fullName evidence="1">Protein C5</fullName>
    </alternativeName>
</protein>
<gene>
    <name evidence="1" type="primary">rnpA</name>
    <name type="ordered locus">BMEA_B1008</name>
</gene>
<reference key="1">
    <citation type="submission" date="2009-03" db="EMBL/GenBank/DDBJ databases">
        <title>Brucella melitensis ATCC 23457 whole genome shotgun sequencing project.</title>
        <authorList>
            <person name="Setubal J.C."/>
            <person name="Boyle S."/>
            <person name="Crasta O.R."/>
            <person name="Gillespie J.J."/>
            <person name="Kenyon R.W."/>
            <person name="Lu J."/>
            <person name="Mane S."/>
            <person name="Nagrani S."/>
            <person name="Shallom J.M."/>
            <person name="Shallom S."/>
            <person name="Shukla M."/>
            <person name="Snyder E.E."/>
            <person name="Sobral B.W."/>
            <person name="Wattam A.R."/>
            <person name="Will R."/>
            <person name="Williams K."/>
            <person name="Yoo H."/>
            <person name="Munk C."/>
            <person name="Tapia R."/>
            <person name="Han C."/>
            <person name="Detter J.C."/>
            <person name="Bruce D."/>
            <person name="Brettin T.S."/>
        </authorList>
    </citation>
    <scope>NUCLEOTIDE SEQUENCE [LARGE SCALE GENOMIC DNA]</scope>
    <source>
        <strain>ATCC 23457</strain>
    </source>
</reference>